<proteinExistence type="inferred from homology"/>
<keyword id="KW-0050">Antiport</keyword>
<keyword id="KW-1003">Cell membrane</keyword>
<keyword id="KW-0375">Hydrogen ion transport</keyword>
<keyword id="KW-0406">Ion transport</keyword>
<keyword id="KW-0472">Membrane</keyword>
<keyword id="KW-0915">Sodium</keyword>
<keyword id="KW-0739">Sodium transport</keyword>
<keyword id="KW-0812">Transmembrane</keyword>
<keyword id="KW-1133">Transmembrane helix</keyword>
<keyword id="KW-0813">Transport</keyword>
<accession>Q5HHD4</accession>
<protein>
    <recommendedName>
        <fullName>Na(+)/H(+) antiporter subunit B1</fullName>
    </recommendedName>
    <alternativeName>
        <fullName>Mnh complex subunit B1</fullName>
    </alternativeName>
</protein>
<gene>
    <name type="primary">mnhB1</name>
    <name type="ordered locus">SACOL0954</name>
</gene>
<evidence type="ECO:0000250" key="1"/>
<evidence type="ECO:0000255" key="2"/>
<evidence type="ECO:0000305" key="3"/>
<organism>
    <name type="scientific">Staphylococcus aureus (strain COL)</name>
    <dbReference type="NCBI Taxonomy" id="93062"/>
    <lineage>
        <taxon>Bacteria</taxon>
        <taxon>Bacillati</taxon>
        <taxon>Bacillota</taxon>
        <taxon>Bacilli</taxon>
        <taxon>Bacillales</taxon>
        <taxon>Staphylococcaceae</taxon>
        <taxon>Staphylococcus</taxon>
    </lineage>
</organism>
<sequence>MNRQQNDLILQFAAVIIFFMVMVFGFSLFLAGHYTPGGGFVGGLLFASSLVIITIAFDIETMRKIFPLDFKILIGIGLVFCIATPIASWFLGKNFFTHVTFDIPLFILEPVHMTTAVFFDFGVLCAVVGTVMTIIISIGENE</sequence>
<name>MNHB1_STAAC</name>
<comment type="function">
    <text evidence="1">Mnh complex is a Na(+)/H(+) antiporter involved in Na(+) excretion.</text>
</comment>
<comment type="subunit">
    <text evidence="1">May form a heterooligomeric complex that consists of seven subunits: mnhA1, mnhB1, mnhC1, mnhD1, mnhE1, mnhF1 and mnhG1.</text>
</comment>
<comment type="subcellular location">
    <subcellularLocation>
        <location evidence="3">Cell membrane</location>
        <topology evidence="3">Multi-pass membrane protein</topology>
    </subcellularLocation>
</comment>
<comment type="similarity">
    <text evidence="3">Belongs to the CPA3 antiporters (TC 2.A.63) subunit B family.</text>
</comment>
<feature type="chain" id="PRO_0000088856" description="Na(+)/H(+) antiporter subunit B1">
    <location>
        <begin position="1"/>
        <end position="142"/>
    </location>
</feature>
<feature type="transmembrane region" description="Helical" evidence="2">
    <location>
        <begin position="9"/>
        <end position="31"/>
    </location>
</feature>
<feature type="transmembrane region" description="Helical" evidence="2">
    <location>
        <begin position="35"/>
        <end position="57"/>
    </location>
</feature>
<feature type="transmembrane region" description="Helical" evidence="2">
    <location>
        <begin position="70"/>
        <end position="92"/>
    </location>
</feature>
<feature type="transmembrane region" description="Helical" evidence="2">
    <location>
        <begin position="116"/>
        <end position="138"/>
    </location>
</feature>
<dbReference type="EMBL" id="CP000046">
    <property type="protein sequence ID" value="AAW37922.1"/>
    <property type="molecule type" value="Genomic_DNA"/>
</dbReference>
<dbReference type="RefSeq" id="WP_001081626.1">
    <property type="nucleotide sequence ID" value="NZ_JBGOFO010000002.1"/>
</dbReference>
<dbReference type="SMR" id="Q5HHD4"/>
<dbReference type="GeneID" id="66839149"/>
<dbReference type="KEGG" id="sac:SACOL0954"/>
<dbReference type="HOGENOM" id="CLU_101659_1_1_9"/>
<dbReference type="Proteomes" id="UP000000530">
    <property type="component" value="Chromosome"/>
</dbReference>
<dbReference type="GO" id="GO:0005886">
    <property type="term" value="C:plasma membrane"/>
    <property type="evidence" value="ECO:0007669"/>
    <property type="project" value="UniProtKB-SubCell"/>
</dbReference>
<dbReference type="GO" id="GO:0015297">
    <property type="term" value="F:antiporter activity"/>
    <property type="evidence" value="ECO:0007669"/>
    <property type="project" value="UniProtKB-KW"/>
</dbReference>
<dbReference type="GO" id="GO:0008324">
    <property type="term" value="F:monoatomic cation transmembrane transporter activity"/>
    <property type="evidence" value="ECO:0007669"/>
    <property type="project" value="InterPro"/>
</dbReference>
<dbReference type="GO" id="GO:1902600">
    <property type="term" value="P:proton transmembrane transport"/>
    <property type="evidence" value="ECO:0007669"/>
    <property type="project" value="UniProtKB-KW"/>
</dbReference>
<dbReference type="GO" id="GO:0006814">
    <property type="term" value="P:sodium ion transport"/>
    <property type="evidence" value="ECO:0007669"/>
    <property type="project" value="UniProtKB-KW"/>
</dbReference>
<dbReference type="InterPro" id="IPR050622">
    <property type="entry name" value="CPA3_antiporter_subunitB"/>
</dbReference>
<dbReference type="InterPro" id="IPR005281">
    <property type="entry name" value="CPA3_sub_B"/>
</dbReference>
<dbReference type="InterPro" id="IPR007182">
    <property type="entry name" value="MnhB"/>
</dbReference>
<dbReference type="NCBIfam" id="TIGR00943">
    <property type="entry name" value="2a6301s02"/>
    <property type="match status" value="1"/>
</dbReference>
<dbReference type="NCBIfam" id="NF009223">
    <property type="entry name" value="PRK12573.1"/>
    <property type="match status" value="1"/>
</dbReference>
<dbReference type="PANTHER" id="PTHR33932">
    <property type="entry name" value="NA(+)/H(+) ANTIPORTER SUBUNIT B"/>
    <property type="match status" value="1"/>
</dbReference>
<dbReference type="PANTHER" id="PTHR33932:SF4">
    <property type="entry name" value="NA(+)_H(+) ANTIPORTER SUBUNIT B"/>
    <property type="match status" value="1"/>
</dbReference>
<dbReference type="Pfam" id="PF04039">
    <property type="entry name" value="MnhB"/>
    <property type="match status" value="1"/>
</dbReference>
<reference key="1">
    <citation type="journal article" date="2005" name="J. Bacteriol.">
        <title>Insights on evolution of virulence and resistance from the complete genome analysis of an early methicillin-resistant Staphylococcus aureus strain and a biofilm-producing methicillin-resistant Staphylococcus epidermidis strain.</title>
        <authorList>
            <person name="Gill S.R."/>
            <person name="Fouts D.E."/>
            <person name="Archer G.L."/>
            <person name="Mongodin E.F."/>
            <person name="DeBoy R.T."/>
            <person name="Ravel J."/>
            <person name="Paulsen I.T."/>
            <person name="Kolonay J.F."/>
            <person name="Brinkac L.M."/>
            <person name="Beanan M.J."/>
            <person name="Dodson R.J."/>
            <person name="Daugherty S.C."/>
            <person name="Madupu R."/>
            <person name="Angiuoli S.V."/>
            <person name="Durkin A.S."/>
            <person name="Haft D.H."/>
            <person name="Vamathevan J.J."/>
            <person name="Khouri H."/>
            <person name="Utterback T.R."/>
            <person name="Lee C."/>
            <person name="Dimitrov G."/>
            <person name="Jiang L."/>
            <person name="Qin H."/>
            <person name="Weidman J."/>
            <person name="Tran K."/>
            <person name="Kang K.H."/>
            <person name="Hance I.R."/>
            <person name="Nelson K.E."/>
            <person name="Fraser C.M."/>
        </authorList>
    </citation>
    <scope>NUCLEOTIDE SEQUENCE [LARGE SCALE GENOMIC DNA]</scope>
    <source>
        <strain>COL</strain>
    </source>
</reference>